<reference key="1">
    <citation type="journal article" date="2004" name="Virus Res.">
        <title>Molecular characterization of a virulent canine coronavirus BGF strain.</title>
        <authorList>
            <person name="Sanchez-Morgado J.M."/>
            <person name="Poynter S."/>
            <person name="Morris T.H."/>
        </authorList>
    </citation>
    <scope>NUCLEOTIDE SEQUENCE [GENOMIC RNA]</scope>
</reference>
<protein>
    <recommendedName>
        <fullName evidence="1">Membrane protein</fullName>
        <shortName evidence="1">M protein</shortName>
    </recommendedName>
    <alternativeName>
        <fullName evidence="1">E1 glycoprotein</fullName>
    </alternativeName>
    <alternativeName>
        <fullName evidence="1">Matrix glycoprotein</fullName>
    </alternativeName>
    <alternativeName>
        <fullName evidence="1">Membrane glycoprotein</fullName>
    </alternativeName>
</protein>
<dbReference type="EMBL" id="AY342160">
    <property type="protein sequence ID" value="AAQ17224.1"/>
    <property type="molecule type" value="Genomic_RNA"/>
</dbReference>
<dbReference type="SMR" id="Q7T6S9"/>
<dbReference type="GO" id="GO:0044178">
    <property type="term" value="C:host cell Golgi membrane"/>
    <property type="evidence" value="ECO:0007669"/>
    <property type="project" value="UniProtKB-SubCell"/>
</dbReference>
<dbReference type="GO" id="GO:0016020">
    <property type="term" value="C:membrane"/>
    <property type="evidence" value="ECO:0007669"/>
    <property type="project" value="UniProtKB-UniRule"/>
</dbReference>
<dbReference type="GO" id="GO:0019031">
    <property type="term" value="C:viral envelope"/>
    <property type="evidence" value="ECO:0007669"/>
    <property type="project" value="UniProtKB-UniRule"/>
</dbReference>
<dbReference type="GO" id="GO:0055036">
    <property type="term" value="C:virion membrane"/>
    <property type="evidence" value="ECO:0007669"/>
    <property type="project" value="UniProtKB-SubCell"/>
</dbReference>
<dbReference type="GO" id="GO:0039660">
    <property type="term" value="F:structural constituent of virion"/>
    <property type="evidence" value="ECO:0007669"/>
    <property type="project" value="UniProtKB-UniRule"/>
</dbReference>
<dbReference type="CDD" id="cd21564">
    <property type="entry name" value="alphaCoV_M"/>
    <property type="match status" value="1"/>
</dbReference>
<dbReference type="HAMAP" id="MF_04201">
    <property type="entry name" value="ALPHA_CORONA_M"/>
    <property type="match status" value="1"/>
</dbReference>
<dbReference type="InterPro" id="IPR042551">
    <property type="entry name" value="ALPHA_CORONA_M"/>
</dbReference>
<dbReference type="InterPro" id="IPR002574">
    <property type="entry name" value="M_CoV"/>
</dbReference>
<dbReference type="Pfam" id="PF01635">
    <property type="entry name" value="CoV_M"/>
    <property type="match status" value="1"/>
</dbReference>
<dbReference type="PROSITE" id="PS51927">
    <property type="entry name" value="COV_M"/>
    <property type="match status" value="1"/>
</dbReference>
<comment type="function">
    <text evidence="1 2">Component of the viral envelope that plays a central role in virus morphogenesis and assembly via its interactions with other viral proteins.</text>
</comment>
<comment type="subunit">
    <text evidence="1 2">Homomultimer. Interacts with envelope E protein in the budding compartment of the host cell, which is located between endoplasmic reticulum and the Golgi complex. Forms a complex with HE and S proteins. Interacts with nucleocapsid N protein. This interaction probably participates in RNA packaging into the virus.</text>
</comment>
<comment type="subcellular location">
    <subcellularLocation>
        <location evidence="1">Virion membrane</location>
        <topology evidence="1">Multi-pass membrane protein</topology>
    </subcellularLocation>
    <subcellularLocation>
        <location evidence="1">Host Golgi apparatus membrane</location>
        <topology evidence="1">Multi-pass membrane protein</topology>
    </subcellularLocation>
    <text evidence="1">Largely embedded in the lipid bilayer.</text>
</comment>
<comment type="similarity">
    <text evidence="1">Belongs to the alphacoronaviruses M protein family.</text>
</comment>
<keyword id="KW-0325">Glycoprotein</keyword>
<keyword id="KW-1040">Host Golgi apparatus</keyword>
<keyword id="KW-1043">Host membrane</keyword>
<keyword id="KW-0472">Membrane</keyword>
<keyword id="KW-0812">Transmembrane</keyword>
<keyword id="KW-1133">Transmembrane helix</keyword>
<keyword id="KW-0261">Viral envelope protein</keyword>
<keyword id="KW-0468">Viral matrix protein</keyword>
<keyword id="KW-0946">Virion</keyword>
<proteinExistence type="inferred from homology"/>
<organism>
    <name type="scientific">Canine coronavirus (strain BGF10)</name>
    <name type="common">CCoV</name>
    <name type="synonym">Canine enteric coronavirus</name>
    <dbReference type="NCBI Taxonomy" id="441619"/>
    <lineage>
        <taxon>Viruses</taxon>
        <taxon>Riboviria</taxon>
        <taxon>Orthornavirae</taxon>
        <taxon>Pisuviricota</taxon>
        <taxon>Pisoniviricetes</taxon>
        <taxon>Nidovirales</taxon>
        <taxon>Cornidovirineae</taxon>
        <taxon>Coronaviridae</taxon>
        <taxon>Orthocoronavirinae</taxon>
        <taxon>Alphacoronavirus</taxon>
        <taxon>Tegacovirus</taxon>
        <taxon>Alphacoronavirus 1</taxon>
    </lineage>
</organism>
<sequence>MKKVLLLLACTIACVYGENYCAMNSTAQTSCLISGSVCALCFEGGDLVWHLANWNFSWSVILIVFITVLQYGRPQFSWFVYGVKMLIMWLLWPIVLALTIFNAYSEYEVSRYVMFGFSVAGAIVTFILWIMYFVRSIQLYRRTKSWWSFNPETNAILCVSALGRSYVLPLEGVPTGVTLTLLSGNLYAEGFKIAGGMNIDNLPKYVMVALPSRTIVYTLVGKQLKASSATGWAYYVKSKAGDYSTDARTDTLSEHEKLLHMV</sequence>
<name>VME1_CVCBG</name>
<feature type="chain" id="PRO_0000289936" description="Membrane protein">
    <location>
        <begin position="1"/>
        <end position="262"/>
    </location>
</feature>
<feature type="topological domain" description="Virion surface" evidence="1">
    <location>
        <begin position="19"/>
        <end position="47"/>
    </location>
</feature>
<feature type="transmembrane region" description="Helical" evidence="1">
    <location>
        <begin position="48"/>
        <end position="68"/>
    </location>
</feature>
<feature type="topological domain" description="Intravirion" evidence="1">
    <location>
        <begin position="69"/>
        <end position="77"/>
    </location>
</feature>
<feature type="transmembrane region" description="Helical" evidence="1">
    <location>
        <begin position="78"/>
        <end position="98"/>
    </location>
</feature>
<feature type="topological domain" description="Virion surface" evidence="1">
    <location>
        <begin position="99"/>
        <end position="112"/>
    </location>
</feature>
<feature type="transmembrane region" description="Helical" evidence="1">
    <location>
        <begin position="113"/>
        <end position="133"/>
    </location>
</feature>
<feature type="topological domain" description="Intravirion" evidence="1">
    <location>
        <begin position="134"/>
        <end position="262"/>
    </location>
</feature>
<feature type="region of interest" description="Interaction with N protein" evidence="1">
    <location>
        <begin position="237"/>
        <end position="252"/>
    </location>
</feature>
<gene>
    <name evidence="1" type="primary">M</name>
</gene>
<accession>Q7T6S9</accession>
<evidence type="ECO:0000255" key="1">
    <source>
        <dbReference type="HAMAP-Rule" id="MF_04201"/>
    </source>
</evidence>
<evidence type="ECO:0000255" key="2">
    <source>
        <dbReference type="PROSITE-ProRule" id="PRU01275"/>
    </source>
</evidence>
<organismHost>
    <name type="scientific">Canis lupus familiaris</name>
    <name type="common">Dog</name>
    <name type="synonym">Canis familiaris</name>
    <dbReference type="NCBI Taxonomy" id="9615"/>
</organismHost>